<protein>
    <recommendedName>
        <fullName evidence="1">Small ribosomal subunit protein bS6</fullName>
    </recommendedName>
    <alternativeName>
        <fullName evidence="2">30S ribosomal protein S6</fullName>
    </alternativeName>
</protein>
<feature type="chain" id="PRO_0000229540" description="Small ribosomal subunit protein bS6">
    <location>
        <begin position="1"/>
        <end position="109"/>
    </location>
</feature>
<dbReference type="EMBL" id="CP000107">
    <property type="protein sequence ID" value="AAZ68727.1"/>
    <property type="molecule type" value="Genomic_DNA"/>
</dbReference>
<dbReference type="RefSeq" id="WP_011304804.1">
    <property type="nucleotide sequence ID" value="NC_007354.1"/>
</dbReference>
<dbReference type="SMR" id="Q3YRC8"/>
<dbReference type="FunCoup" id="Q3YRC8">
    <property type="interactions" value="298"/>
</dbReference>
<dbReference type="STRING" id="269484.Ecaj_0695"/>
<dbReference type="KEGG" id="ecn:Ecaj_0695"/>
<dbReference type="eggNOG" id="COG0360">
    <property type="taxonomic scope" value="Bacteria"/>
</dbReference>
<dbReference type="HOGENOM" id="CLU_113441_5_3_5"/>
<dbReference type="InParanoid" id="Q3YRC8"/>
<dbReference type="Proteomes" id="UP000000435">
    <property type="component" value="Chromosome"/>
</dbReference>
<dbReference type="GO" id="GO:0005737">
    <property type="term" value="C:cytoplasm"/>
    <property type="evidence" value="ECO:0007669"/>
    <property type="project" value="UniProtKB-ARBA"/>
</dbReference>
<dbReference type="GO" id="GO:1990904">
    <property type="term" value="C:ribonucleoprotein complex"/>
    <property type="evidence" value="ECO:0007669"/>
    <property type="project" value="UniProtKB-KW"/>
</dbReference>
<dbReference type="GO" id="GO:0005840">
    <property type="term" value="C:ribosome"/>
    <property type="evidence" value="ECO:0007669"/>
    <property type="project" value="UniProtKB-KW"/>
</dbReference>
<dbReference type="GO" id="GO:0070181">
    <property type="term" value="F:small ribosomal subunit rRNA binding"/>
    <property type="evidence" value="ECO:0007669"/>
    <property type="project" value="TreeGrafter"/>
</dbReference>
<dbReference type="GO" id="GO:0003735">
    <property type="term" value="F:structural constituent of ribosome"/>
    <property type="evidence" value="ECO:0007669"/>
    <property type="project" value="InterPro"/>
</dbReference>
<dbReference type="GO" id="GO:0006412">
    <property type="term" value="P:translation"/>
    <property type="evidence" value="ECO:0007669"/>
    <property type="project" value="UniProtKB-UniRule"/>
</dbReference>
<dbReference type="CDD" id="cd00473">
    <property type="entry name" value="bS6"/>
    <property type="match status" value="1"/>
</dbReference>
<dbReference type="Gene3D" id="3.30.70.60">
    <property type="match status" value="1"/>
</dbReference>
<dbReference type="HAMAP" id="MF_00360">
    <property type="entry name" value="Ribosomal_bS6"/>
    <property type="match status" value="1"/>
</dbReference>
<dbReference type="InterPro" id="IPR000529">
    <property type="entry name" value="Ribosomal_bS6"/>
</dbReference>
<dbReference type="InterPro" id="IPR035980">
    <property type="entry name" value="Ribosomal_bS6_sf"/>
</dbReference>
<dbReference type="InterPro" id="IPR020814">
    <property type="entry name" value="Ribosomal_S6_plastid/chlpt"/>
</dbReference>
<dbReference type="InterPro" id="IPR014717">
    <property type="entry name" value="Transl_elong_EF1B/ribsomal_bS6"/>
</dbReference>
<dbReference type="NCBIfam" id="TIGR00166">
    <property type="entry name" value="S6"/>
    <property type="match status" value="1"/>
</dbReference>
<dbReference type="PANTHER" id="PTHR21011">
    <property type="entry name" value="MITOCHONDRIAL 28S RIBOSOMAL PROTEIN S6"/>
    <property type="match status" value="1"/>
</dbReference>
<dbReference type="PANTHER" id="PTHR21011:SF1">
    <property type="entry name" value="SMALL RIBOSOMAL SUBUNIT PROTEIN BS6M"/>
    <property type="match status" value="1"/>
</dbReference>
<dbReference type="Pfam" id="PF01250">
    <property type="entry name" value="Ribosomal_S6"/>
    <property type="match status" value="1"/>
</dbReference>
<dbReference type="SUPFAM" id="SSF54995">
    <property type="entry name" value="Ribosomal protein S6"/>
    <property type="match status" value="1"/>
</dbReference>
<accession>Q3YRC8</accession>
<evidence type="ECO:0000255" key="1">
    <source>
        <dbReference type="HAMAP-Rule" id="MF_00360"/>
    </source>
</evidence>
<evidence type="ECO:0000305" key="2"/>
<reference key="1">
    <citation type="journal article" date="2006" name="J. Bacteriol.">
        <title>The genome of the obligately intracellular bacterium Ehrlichia canis reveals themes of complex membrane structure and immune evasion strategies.</title>
        <authorList>
            <person name="Mavromatis K."/>
            <person name="Doyle C.K."/>
            <person name="Lykidis A."/>
            <person name="Ivanova N."/>
            <person name="Francino M.P."/>
            <person name="Chain P."/>
            <person name="Shin M."/>
            <person name="Malfatti S."/>
            <person name="Larimer F."/>
            <person name="Copeland A."/>
            <person name="Detter J.C."/>
            <person name="Land M."/>
            <person name="Richardson P.M."/>
            <person name="Yu X.J."/>
            <person name="Walker D.H."/>
            <person name="McBride J.W."/>
            <person name="Kyrpides N.C."/>
        </authorList>
    </citation>
    <scope>NUCLEOTIDE SEQUENCE [LARGE SCALE GENOMIC DNA]</scope>
    <source>
        <strain>Jake</strain>
    </source>
</reference>
<gene>
    <name evidence="1" type="primary">rpsF</name>
    <name type="ordered locus">Ecaj_0695</name>
</gene>
<sequence>MPLYEFTFIAQQGLTQYELEGLVKGLSSLLTKNGAELLKYEYWGLLDFAYTIDKMNKGHYCMIYIKATPSSMDEFKRKVRLNEDVLRFLCLKKDKLPKGDSLMIQANQV</sequence>
<keyword id="KW-0687">Ribonucleoprotein</keyword>
<keyword id="KW-0689">Ribosomal protein</keyword>
<keyword id="KW-0694">RNA-binding</keyword>
<keyword id="KW-0699">rRNA-binding</keyword>
<comment type="function">
    <text evidence="1">Binds together with bS18 to 16S ribosomal RNA.</text>
</comment>
<comment type="similarity">
    <text evidence="1">Belongs to the bacterial ribosomal protein bS6 family.</text>
</comment>
<name>RS6_EHRCJ</name>
<organism>
    <name type="scientific">Ehrlichia canis (strain Jake)</name>
    <dbReference type="NCBI Taxonomy" id="269484"/>
    <lineage>
        <taxon>Bacteria</taxon>
        <taxon>Pseudomonadati</taxon>
        <taxon>Pseudomonadota</taxon>
        <taxon>Alphaproteobacteria</taxon>
        <taxon>Rickettsiales</taxon>
        <taxon>Anaplasmataceae</taxon>
        <taxon>Ehrlichia</taxon>
    </lineage>
</organism>
<proteinExistence type="inferred from homology"/>